<name>HIS2_CHRVO</name>
<proteinExistence type="evidence at protein level"/>
<dbReference type="EC" id="3.6.1.31" evidence="1"/>
<dbReference type="EMBL" id="AE016825">
    <property type="protein sequence ID" value="AAQ58297.1"/>
    <property type="molecule type" value="Genomic_DNA"/>
</dbReference>
<dbReference type="RefSeq" id="WP_011134176.1">
    <property type="nucleotide sequence ID" value="NC_005085.1"/>
</dbReference>
<dbReference type="PDB" id="2A7W">
    <property type="method" value="X-ray"/>
    <property type="resolution" value="2.80 A"/>
    <property type="chains" value="A/B/C/D/E/F/G/H/I/J/K/L=1-108"/>
</dbReference>
<dbReference type="PDBsum" id="2A7W"/>
<dbReference type="SMR" id="Q7P0E6"/>
<dbReference type="STRING" id="243365.CV_0621"/>
<dbReference type="KEGG" id="cvi:CV_0621"/>
<dbReference type="eggNOG" id="COG0140">
    <property type="taxonomic scope" value="Bacteria"/>
</dbReference>
<dbReference type="HOGENOM" id="CLU_123337_1_2_4"/>
<dbReference type="OrthoDB" id="9814738at2"/>
<dbReference type="UniPathway" id="UPA00031">
    <property type="reaction ID" value="UER00007"/>
</dbReference>
<dbReference type="EvolutionaryTrace" id="Q7P0E6"/>
<dbReference type="Proteomes" id="UP000001424">
    <property type="component" value="Chromosome"/>
</dbReference>
<dbReference type="GO" id="GO:0005737">
    <property type="term" value="C:cytoplasm"/>
    <property type="evidence" value="ECO:0007669"/>
    <property type="project" value="UniProtKB-SubCell"/>
</dbReference>
<dbReference type="GO" id="GO:0005524">
    <property type="term" value="F:ATP binding"/>
    <property type="evidence" value="ECO:0007669"/>
    <property type="project" value="UniProtKB-KW"/>
</dbReference>
<dbReference type="GO" id="GO:0004636">
    <property type="term" value="F:phosphoribosyl-ATP diphosphatase activity"/>
    <property type="evidence" value="ECO:0007669"/>
    <property type="project" value="UniProtKB-UniRule"/>
</dbReference>
<dbReference type="GO" id="GO:0000105">
    <property type="term" value="P:L-histidine biosynthetic process"/>
    <property type="evidence" value="ECO:0007669"/>
    <property type="project" value="UniProtKB-UniRule"/>
</dbReference>
<dbReference type="CDD" id="cd11534">
    <property type="entry name" value="NTP-PPase_HisIE_like"/>
    <property type="match status" value="1"/>
</dbReference>
<dbReference type="Gene3D" id="1.10.287.1080">
    <property type="entry name" value="MazG-like"/>
    <property type="match status" value="1"/>
</dbReference>
<dbReference type="HAMAP" id="MF_01020">
    <property type="entry name" value="HisE"/>
    <property type="match status" value="1"/>
</dbReference>
<dbReference type="InterPro" id="IPR008179">
    <property type="entry name" value="HisE"/>
</dbReference>
<dbReference type="InterPro" id="IPR021130">
    <property type="entry name" value="PRib-ATP_PPHydrolase-like"/>
</dbReference>
<dbReference type="NCBIfam" id="TIGR03188">
    <property type="entry name" value="histidine_hisI"/>
    <property type="match status" value="1"/>
</dbReference>
<dbReference type="NCBIfam" id="NF001611">
    <property type="entry name" value="PRK00400.1-3"/>
    <property type="match status" value="1"/>
</dbReference>
<dbReference type="PANTHER" id="PTHR42945">
    <property type="entry name" value="HISTIDINE BIOSYNTHESIS BIFUNCTIONAL PROTEIN"/>
    <property type="match status" value="1"/>
</dbReference>
<dbReference type="PANTHER" id="PTHR42945:SF9">
    <property type="entry name" value="HISTIDINE BIOSYNTHESIS BIFUNCTIONAL PROTEIN HISIE"/>
    <property type="match status" value="1"/>
</dbReference>
<dbReference type="Pfam" id="PF01503">
    <property type="entry name" value="PRA-PH"/>
    <property type="match status" value="1"/>
</dbReference>
<dbReference type="SUPFAM" id="SSF101386">
    <property type="entry name" value="all-alpha NTP pyrophosphatases"/>
    <property type="match status" value="1"/>
</dbReference>
<reference key="1">
    <citation type="journal article" date="2003" name="Proc. Natl. Acad. Sci. U.S.A.">
        <title>The complete genome sequence of Chromobacterium violaceum reveals remarkable and exploitable bacterial adaptability.</title>
        <authorList>
            <person name="Vasconcelos A.T.R."/>
            <person name="de Almeida D.F."/>
            <person name="Hungria M."/>
            <person name="Guimaraes C.T."/>
            <person name="Antonio R.V."/>
            <person name="Almeida F.C."/>
            <person name="de Almeida L.G.P."/>
            <person name="de Almeida R."/>
            <person name="Alves-Gomes J.A."/>
            <person name="Andrade E.M."/>
            <person name="Araripe J."/>
            <person name="de Araujo M.F.F."/>
            <person name="Astolfi-Filho S."/>
            <person name="Azevedo V."/>
            <person name="Baptista A.J."/>
            <person name="Bataus L.A.M."/>
            <person name="Batista J.S."/>
            <person name="Belo A."/>
            <person name="van den Berg C."/>
            <person name="Bogo M."/>
            <person name="Bonatto S."/>
            <person name="Bordignon J."/>
            <person name="Brigido M.M."/>
            <person name="Brito C.A."/>
            <person name="Brocchi M."/>
            <person name="Burity H.A."/>
            <person name="Camargo A.A."/>
            <person name="Cardoso D.D.P."/>
            <person name="Carneiro N.P."/>
            <person name="Carraro D.M."/>
            <person name="Carvalho C.M.B."/>
            <person name="Cascardo J.C.M."/>
            <person name="Cavada B.S."/>
            <person name="Chueire L.M.O."/>
            <person name="Creczynski-Pasa T.B."/>
            <person name="Cunha-Junior N.C."/>
            <person name="Fagundes N."/>
            <person name="Falcao C.L."/>
            <person name="Fantinatti F."/>
            <person name="Farias I.P."/>
            <person name="Felipe M.S.S."/>
            <person name="Ferrari L.P."/>
            <person name="Ferro J.A."/>
            <person name="Ferro M.I.T."/>
            <person name="Franco G.R."/>
            <person name="Freitas N.S.A."/>
            <person name="Furlan L.R."/>
            <person name="Gazzinelli R.T."/>
            <person name="Gomes E.A."/>
            <person name="Goncalves P.R."/>
            <person name="Grangeiro T.B."/>
            <person name="Grattapaglia D."/>
            <person name="Grisard E.C."/>
            <person name="Hanna E.S."/>
            <person name="Jardim S.N."/>
            <person name="Laurino J."/>
            <person name="Leoi L.C.T."/>
            <person name="Lima L.F.A."/>
            <person name="Loureiro M.F."/>
            <person name="Lyra M.C.C.P."/>
            <person name="Madeira H.M.F."/>
            <person name="Manfio G.P."/>
            <person name="Maranhao A.Q."/>
            <person name="Martins W.S."/>
            <person name="di Mauro S.M.Z."/>
            <person name="de Medeiros S.R.B."/>
            <person name="Meissner R.V."/>
            <person name="Moreira M.A.M."/>
            <person name="Nascimento F.F."/>
            <person name="Nicolas M.F."/>
            <person name="Oliveira J.G."/>
            <person name="Oliveira S.C."/>
            <person name="Paixao R.F.C."/>
            <person name="Parente J.A."/>
            <person name="Pedrosa F.O."/>
            <person name="Pena S.D.J."/>
            <person name="Pereira J.O."/>
            <person name="Pereira M."/>
            <person name="Pinto L.S.R.C."/>
            <person name="Pinto L.S."/>
            <person name="Porto J.I.R."/>
            <person name="Potrich D.P."/>
            <person name="Ramalho-Neto C.E."/>
            <person name="Reis A.M.M."/>
            <person name="Rigo L.U."/>
            <person name="Rondinelli E."/>
            <person name="Santos E.B.P."/>
            <person name="Santos F.R."/>
            <person name="Schneider M.P.C."/>
            <person name="Seuanez H.N."/>
            <person name="Silva A.M.R."/>
            <person name="da Silva A.L.C."/>
            <person name="Silva D.W."/>
            <person name="Silva R."/>
            <person name="Simoes I.C."/>
            <person name="Simon D."/>
            <person name="Soares C.M.A."/>
            <person name="Soares R.B.A."/>
            <person name="Souza E.M."/>
            <person name="Souza K.R.L."/>
            <person name="Souza R.C."/>
            <person name="Steffens M.B.R."/>
            <person name="Steindel M."/>
            <person name="Teixeira S.R."/>
            <person name="Urmenyi T."/>
            <person name="Vettore A."/>
            <person name="Wassem R."/>
            <person name="Zaha A."/>
            <person name="Simpson A.J.G."/>
        </authorList>
    </citation>
    <scope>NUCLEOTIDE SEQUENCE [LARGE SCALE GENOMIC DNA]</scope>
    <source>
        <strain>ATCC 12472 / DSM 30191 / JCM 1249 / CCUG 213 / NBRC 12614 / NCIMB 9131 / NCTC 9757 / MK</strain>
    </source>
</reference>
<gene>
    <name evidence="1" type="primary">hisE</name>
    <name type="ordered locus">CV_0621</name>
</gene>
<evidence type="ECO:0000255" key="1">
    <source>
        <dbReference type="HAMAP-Rule" id="MF_01020"/>
    </source>
</evidence>
<evidence type="ECO:0007829" key="2">
    <source>
        <dbReference type="PDB" id="2A7W"/>
    </source>
</evidence>
<keyword id="KW-0002">3D-structure</keyword>
<keyword id="KW-0028">Amino-acid biosynthesis</keyword>
<keyword id="KW-0067">ATP-binding</keyword>
<keyword id="KW-0963">Cytoplasm</keyword>
<keyword id="KW-0368">Histidine biosynthesis</keyword>
<keyword id="KW-0378">Hydrolase</keyword>
<keyword id="KW-0547">Nucleotide-binding</keyword>
<keyword id="KW-1185">Reference proteome</keyword>
<accession>Q7P0E6</accession>
<protein>
    <recommendedName>
        <fullName evidence="1">Phosphoribosyl-ATP pyrophosphatase</fullName>
        <shortName evidence="1">PRA-PH</shortName>
        <ecNumber evidence="1">3.6.1.31</ecNumber>
    </recommendedName>
</protein>
<sequence length="108" mass="12139">MTPDVLKNIADTLEARREAAPQSSYVASLFHKGEDAILKKVAEEAAETLMASKDKDKLHLVREVADLWFHTMVLLTYHGLRPEDVVMELHRREGISGLDEKASRKPTA</sequence>
<feature type="chain" id="PRO_0000136356" description="Phosphoribosyl-ATP pyrophosphatase">
    <location>
        <begin position="1"/>
        <end position="108"/>
    </location>
</feature>
<feature type="helix" evidence="2">
    <location>
        <begin position="6"/>
        <end position="15"/>
    </location>
</feature>
<feature type="helix" evidence="2">
    <location>
        <begin position="16"/>
        <end position="18"/>
    </location>
</feature>
<feature type="turn" evidence="2">
    <location>
        <begin position="21"/>
        <end position="23"/>
    </location>
</feature>
<feature type="helix" evidence="2">
    <location>
        <begin position="25"/>
        <end position="32"/>
    </location>
</feature>
<feature type="helix" evidence="2">
    <location>
        <begin position="34"/>
        <end position="53"/>
    </location>
</feature>
<feature type="helix" evidence="2">
    <location>
        <begin position="57"/>
        <end position="77"/>
    </location>
</feature>
<feature type="helix" evidence="2">
    <location>
        <begin position="82"/>
        <end position="92"/>
    </location>
</feature>
<organism>
    <name type="scientific">Chromobacterium violaceum (strain ATCC 12472 / DSM 30191 / JCM 1249 / CCUG 213 / NBRC 12614 / NCIMB 9131 / NCTC 9757 / MK)</name>
    <dbReference type="NCBI Taxonomy" id="243365"/>
    <lineage>
        <taxon>Bacteria</taxon>
        <taxon>Pseudomonadati</taxon>
        <taxon>Pseudomonadota</taxon>
        <taxon>Betaproteobacteria</taxon>
        <taxon>Neisseriales</taxon>
        <taxon>Chromobacteriaceae</taxon>
        <taxon>Chromobacterium</taxon>
    </lineage>
</organism>
<comment type="catalytic activity">
    <reaction evidence="1">
        <text>1-(5-phospho-beta-D-ribosyl)-ATP + H2O = 1-(5-phospho-beta-D-ribosyl)-5'-AMP + diphosphate + H(+)</text>
        <dbReference type="Rhea" id="RHEA:22828"/>
        <dbReference type="ChEBI" id="CHEBI:15377"/>
        <dbReference type="ChEBI" id="CHEBI:15378"/>
        <dbReference type="ChEBI" id="CHEBI:33019"/>
        <dbReference type="ChEBI" id="CHEBI:59457"/>
        <dbReference type="ChEBI" id="CHEBI:73183"/>
        <dbReference type="EC" id="3.6.1.31"/>
    </reaction>
</comment>
<comment type="pathway">
    <text evidence="1">Amino-acid biosynthesis; L-histidine biosynthesis; L-histidine from 5-phospho-alpha-D-ribose 1-diphosphate: step 2/9.</text>
</comment>
<comment type="subcellular location">
    <subcellularLocation>
        <location evidence="1">Cytoplasm</location>
    </subcellularLocation>
</comment>
<comment type="similarity">
    <text evidence="1">Belongs to the PRA-PH family.</text>
</comment>